<feature type="chain" id="PRO_1000195597" description="Large ribosomal subunit protein uL11">
    <location>
        <begin position="1"/>
        <end position="141"/>
    </location>
</feature>
<protein>
    <recommendedName>
        <fullName evidence="1">Large ribosomal subunit protein uL11</fullName>
    </recommendedName>
    <alternativeName>
        <fullName evidence="2">50S ribosomal protein L11</fullName>
    </alternativeName>
</protein>
<sequence>MAKKLVAVVKLQLPAGKATPAPPVGPALGQYGINIMAFVKEYNEKSASQAGSIVPVEISIYSDRSFVARLLTPPAADLLRKAAGVQKGSSNPKRNPVGTITRAQLRQIAQQKLPDMNANDIEAAERIIAGTARSMGIKIVD</sequence>
<gene>
    <name evidence="1" type="primary">rplK</name>
    <name type="ordered locus">Cagg_1476</name>
</gene>
<organism>
    <name type="scientific">Chloroflexus aggregans (strain MD-66 / DSM 9485)</name>
    <dbReference type="NCBI Taxonomy" id="326427"/>
    <lineage>
        <taxon>Bacteria</taxon>
        <taxon>Bacillati</taxon>
        <taxon>Chloroflexota</taxon>
        <taxon>Chloroflexia</taxon>
        <taxon>Chloroflexales</taxon>
        <taxon>Chloroflexineae</taxon>
        <taxon>Chloroflexaceae</taxon>
        <taxon>Chloroflexus</taxon>
    </lineage>
</organism>
<evidence type="ECO:0000255" key="1">
    <source>
        <dbReference type="HAMAP-Rule" id="MF_00736"/>
    </source>
</evidence>
<evidence type="ECO:0000305" key="2"/>
<name>RL11_CHLAD</name>
<keyword id="KW-0488">Methylation</keyword>
<keyword id="KW-0687">Ribonucleoprotein</keyword>
<keyword id="KW-0689">Ribosomal protein</keyword>
<keyword id="KW-0694">RNA-binding</keyword>
<keyword id="KW-0699">rRNA-binding</keyword>
<accession>B8G991</accession>
<reference key="1">
    <citation type="submission" date="2008-12" db="EMBL/GenBank/DDBJ databases">
        <title>Complete sequence of Chloroflexus aggregans DSM 9485.</title>
        <authorList>
            <consortium name="US DOE Joint Genome Institute"/>
            <person name="Lucas S."/>
            <person name="Copeland A."/>
            <person name="Lapidus A."/>
            <person name="Glavina del Rio T."/>
            <person name="Dalin E."/>
            <person name="Tice H."/>
            <person name="Pitluck S."/>
            <person name="Foster B."/>
            <person name="Larimer F."/>
            <person name="Land M."/>
            <person name="Hauser L."/>
            <person name="Kyrpides N."/>
            <person name="Mikhailova N."/>
            <person name="Bryant D.A."/>
            <person name="Richardson P."/>
        </authorList>
    </citation>
    <scope>NUCLEOTIDE SEQUENCE [LARGE SCALE GENOMIC DNA]</scope>
    <source>
        <strain>MD-66 / DSM 9485</strain>
    </source>
</reference>
<dbReference type="EMBL" id="CP001337">
    <property type="protein sequence ID" value="ACL24381.1"/>
    <property type="molecule type" value="Genomic_DNA"/>
</dbReference>
<dbReference type="RefSeq" id="WP_015940240.1">
    <property type="nucleotide sequence ID" value="NC_011831.1"/>
</dbReference>
<dbReference type="SMR" id="B8G991"/>
<dbReference type="STRING" id="326427.Cagg_1476"/>
<dbReference type="KEGG" id="cag:Cagg_1476"/>
<dbReference type="eggNOG" id="COG0080">
    <property type="taxonomic scope" value="Bacteria"/>
</dbReference>
<dbReference type="HOGENOM" id="CLU_074237_2_2_0"/>
<dbReference type="OrthoDB" id="9802408at2"/>
<dbReference type="Proteomes" id="UP000002508">
    <property type="component" value="Chromosome"/>
</dbReference>
<dbReference type="GO" id="GO:0022625">
    <property type="term" value="C:cytosolic large ribosomal subunit"/>
    <property type="evidence" value="ECO:0007669"/>
    <property type="project" value="TreeGrafter"/>
</dbReference>
<dbReference type="GO" id="GO:0070180">
    <property type="term" value="F:large ribosomal subunit rRNA binding"/>
    <property type="evidence" value="ECO:0007669"/>
    <property type="project" value="UniProtKB-UniRule"/>
</dbReference>
<dbReference type="GO" id="GO:0003735">
    <property type="term" value="F:structural constituent of ribosome"/>
    <property type="evidence" value="ECO:0007669"/>
    <property type="project" value="InterPro"/>
</dbReference>
<dbReference type="GO" id="GO:0006412">
    <property type="term" value="P:translation"/>
    <property type="evidence" value="ECO:0007669"/>
    <property type="project" value="UniProtKB-UniRule"/>
</dbReference>
<dbReference type="CDD" id="cd00349">
    <property type="entry name" value="Ribosomal_L11"/>
    <property type="match status" value="1"/>
</dbReference>
<dbReference type="FunFam" id="1.10.10.250:FF:000001">
    <property type="entry name" value="50S ribosomal protein L11"/>
    <property type="match status" value="1"/>
</dbReference>
<dbReference type="FunFam" id="3.30.1550.10:FF:000005">
    <property type="entry name" value="50S ribosomal protein L11"/>
    <property type="match status" value="1"/>
</dbReference>
<dbReference type="Gene3D" id="1.10.10.250">
    <property type="entry name" value="Ribosomal protein L11, C-terminal domain"/>
    <property type="match status" value="1"/>
</dbReference>
<dbReference type="Gene3D" id="3.30.1550.10">
    <property type="entry name" value="Ribosomal protein L11/L12, N-terminal domain"/>
    <property type="match status" value="1"/>
</dbReference>
<dbReference type="HAMAP" id="MF_00736">
    <property type="entry name" value="Ribosomal_uL11"/>
    <property type="match status" value="1"/>
</dbReference>
<dbReference type="InterPro" id="IPR000911">
    <property type="entry name" value="Ribosomal_uL11"/>
</dbReference>
<dbReference type="InterPro" id="IPR006519">
    <property type="entry name" value="Ribosomal_uL11_bac-typ"/>
</dbReference>
<dbReference type="InterPro" id="IPR020783">
    <property type="entry name" value="Ribosomal_uL11_C"/>
</dbReference>
<dbReference type="InterPro" id="IPR036769">
    <property type="entry name" value="Ribosomal_uL11_C_sf"/>
</dbReference>
<dbReference type="InterPro" id="IPR020785">
    <property type="entry name" value="Ribosomal_uL11_CS"/>
</dbReference>
<dbReference type="InterPro" id="IPR020784">
    <property type="entry name" value="Ribosomal_uL11_N"/>
</dbReference>
<dbReference type="InterPro" id="IPR036796">
    <property type="entry name" value="Ribosomal_uL11_N_sf"/>
</dbReference>
<dbReference type="NCBIfam" id="TIGR01632">
    <property type="entry name" value="L11_bact"/>
    <property type="match status" value="1"/>
</dbReference>
<dbReference type="PANTHER" id="PTHR11661">
    <property type="entry name" value="60S RIBOSOMAL PROTEIN L12"/>
    <property type="match status" value="1"/>
</dbReference>
<dbReference type="PANTHER" id="PTHR11661:SF1">
    <property type="entry name" value="LARGE RIBOSOMAL SUBUNIT PROTEIN UL11M"/>
    <property type="match status" value="1"/>
</dbReference>
<dbReference type="Pfam" id="PF00298">
    <property type="entry name" value="Ribosomal_L11"/>
    <property type="match status" value="1"/>
</dbReference>
<dbReference type="Pfam" id="PF03946">
    <property type="entry name" value="Ribosomal_L11_N"/>
    <property type="match status" value="1"/>
</dbReference>
<dbReference type="SMART" id="SM00649">
    <property type="entry name" value="RL11"/>
    <property type="match status" value="1"/>
</dbReference>
<dbReference type="SUPFAM" id="SSF54747">
    <property type="entry name" value="Ribosomal L11/L12e N-terminal domain"/>
    <property type="match status" value="1"/>
</dbReference>
<dbReference type="SUPFAM" id="SSF46906">
    <property type="entry name" value="Ribosomal protein L11, C-terminal domain"/>
    <property type="match status" value="1"/>
</dbReference>
<dbReference type="PROSITE" id="PS00359">
    <property type="entry name" value="RIBOSOMAL_L11"/>
    <property type="match status" value="1"/>
</dbReference>
<comment type="function">
    <text evidence="1">Forms part of the ribosomal stalk which helps the ribosome interact with GTP-bound translation factors.</text>
</comment>
<comment type="subunit">
    <text evidence="1">Part of the ribosomal stalk of the 50S ribosomal subunit. Interacts with L10 and the large rRNA to form the base of the stalk. L10 forms an elongated spine to which L12 dimers bind in a sequential fashion forming a multimeric L10(L12)X complex.</text>
</comment>
<comment type="PTM">
    <text evidence="1">One or more lysine residues are methylated.</text>
</comment>
<comment type="similarity">
    <text evidence="1">Belongs to the universal ribosomal protein uL11 family.</text>
</comment>
<proteinExistence type="inferred from homology"/>